<dbReference type="EMBL" id="CP001063">
    <property type="protein sequence ID" value="ACD07890.1"/>
    <property type="molecule type" value="Genomic_DNA"/>
</dbReference>
<dbReference type="RefSeq" id="WP_001274021.1">
    <property type="nucleotide sequence ID" value="NC_010658.1"/>
</dbReference>
<dbReference type="SMR" id="B2U242"/>
<dbReference type="STRING" id="344609.SbBS512_E0027"/>
<dbReference type="GeneID" id="93777413"/>
<dbReference type="KEGG" id="sbc:SbBS512_E0027"/>
<dbReference type="HOGENOM" id="CLU_160655_4_0_6"/>
<dbReference type="Proteomes" id="UP000001030">
    <property type="component" value="Chromosome"/>
</dbReference>
<dbReference type="GO" id="GO:0005829">
    <property type="term" value="C:cytosol"/>
    <property type="evidence" value="ECO:0007669"/>
    <property type="project" value="TreeGrafter"/>
</dbReference>
<dbReference type="GO" id="GO:0015935">
    <property type="term" value="C:small ribosomal subunit"/>
    <property type="evidence" value="ECO:0007669"/>
    <property type="project" value="TreeGrafter"/>
</dbReference>
<dbReference type="GO" id="GO:0070181">
    <property type="term" value="F:small ribosomal subunit rRNA binding"/>
    <property type="evidence" value="ECO:0007669"/>
    <property type="project" value="TreeGrafter"/>
</dbReference>
<dbReference type="GO" id="GO:0003735">
    <property type="term" value="F:structural constituent of ribosome"/>
    <property type="evidence" value="ECO:0007669"/>
    <property type="project" value="InterPro"/>
</dbReference>
<dbReference type="GO" id="GO:0006412">
    <property type="term" value="P:translation"/>
    <property type="evidence" value="ECO:0007669"/>
    <property type="project" value="UniProtKB-UniRule"/>
</dbReference>
<dbReference type="FunFam" id="1.20.58.110:FF:000001">
    <property type="entry name" value="30S ribosomal protein S20"/>
    <property type="match status" value="1"/>
</dbReference>
<dbReference type="Gene3D" id="1.20.58.110">
    <property type="entry name" value="Ribosomal protein S20"/>
    <property type="match status" value="1"/>
</dbReference>
<dbReference type="HAMAP" id="MF_00500">
    <property type="entry name" value="Ribosomal_bS20"/>
    <property type="match status" value="1"/>
</dbReference>
<dbReference type="InterPro" id="IPR002583">
    <property type="entry name" value="Ribosomal_bS20"/>
</dbReference>
<dbReference type="InterPro" id="IPR036510">
    <property type="entry name" value="Ribosomal_bS20_sf"/>
</dbReference>
<dbReference type="NCBIfam" id="TIGR00029">
    <property type="entry name" value="S20"/>
    <property type="match status" value="1"/>
</dbReference>
<dbReference type="PANTHER" id="PTHR33398">
    <property type="entry name" value="30S RIBOSOMAL PROTEIN S20"/>
    <property type="match status" value="1"/>
</dbReference>
<dbReference type="PANTHER" id="PTHR33398:SF1">
    <property type="entry name" value="SMALL RIBOSOMAL SUBUNIT PROTEIN BS20C"/>
    <property type="match status" value="1"/>
</dbReference>
<dbReference type="Pfam" id="PF01649">
    <property type="entry name" value="Ribosomal_S20p"/>
    <property type="match status" value="1"/>
</dbReference>
<dbReference type="SUPFAM" id="SSF46992">
    <property type="entry name" value="Ribosomal protein S20"/>
    <property type="match status" value="1"/>
</dbReference>
<protein>
    <recommendedName>
        <fullName evidence="1">Small ribosomal subunit protein bS20</fullName>
    </recommendedName>
    <alternativeName>
        <fullName evidence="3">30S ribosomal protein S20</fullName>
    </alternativeName>
</protein>
<gene>
    <name evidence="1" type="primary">rpsT</name>
    <name type="ordered locus">SbBS512_E0027</name>
</gene>
<organism>
    <name type="scientific">Shigella boydii serotype 18 (strain CDC 3083-94 / BS512)</name>
    <dbReference type="NCBI Taxonomy" id="344609"/>
    <lineage>
        <taxon>Bacteria</taxon>
        <taxon>Pseudomonadati</taxon>
        <taxon>Pseudomonadota</taxon>
        <taxon>Gammaproteobacteria</taxon>
        <taxon>Enterobacterales</taxon>
        <taxon>Enterobacteriaceae</taxon>
        <taxon>Shigella</taxon>
    </lineage>
</organism>
<keyword id="KW-1185">Reference proteome</keyword>
<keyword id="KW-0687">Ribonucleoprotein</keyword>
<keyword id="KW-0689">Ribosomal protein</keyword>
<keyword id="KW-0694">RNA-binding</keyword>
<keyword id="KW-0699">rRNA-binding</keyword>
<proteinExistence type="inferred from homology"/>
<feature type="chain" id="PRO_1000126514" description="Small ribosomal subunit protein bS20">
    <location>
        <begin position="1"/>
        <end position="87"/>
    </location>
</feature>
<feature type="region of interest" description="Disordered" evidence="2">
    <location>
        <begin position="1"/>
        <end position="26"/>
    </location>
</feature>
<name>RS20_SHIB3</name>
<accession>B2U242</accession>
<comment type="function">
    <text evidence="1">Binds directly to 16S ribosomal RNA.</text>
</comment>
<comment type="similarity">
    <text evidence="1">Belongs to the bacterial ribosomal protein bS20 family.</text>
</comment>
<sequence>MANIKSAKKRAIQSEKARKHNASRRSMMRTFIKKVYAAIEAGDKAAAQKAFNEMQPIVDRQAAKGLIHKNKAARHKANLTAQINKLA</sequence>
<reference key="1">
    <citation type="submission" date="2008-05" db="EMBL/GenBank/DDBJ databases">
        <title>Complete sequence of Shigella boydii serotype 18 strain BS512.</title>
        <authorList>
            <person name="Rasko D.A."/>
            <person name="Rosovitz M."/>
            <person name="Maurelli A.T."/>
            <person name="Myers G."/>
            <person name="Seshadri R."/>
            <person name="Cer R."/>
            <person name="Jiang L."/>
            <person name="Ravel J."/>
            <person name="Sebastian Y."/>
        </authorList>
    </citation>
    <scope>NUCLEOTIDE SEQUENCE [LARGE SCALE GENOMIC DNA]</scope>
    <source>
        <strain>CDC 3083-94 / BS512</strain>
    </source>
</reference>
<evidence type="ECO:0000255" key="1">
    <source>
        <dbReference type="HAMAP-Rule" id="MF_00500"/>
    </source>
</evidence>
<evidence type="ECO:0000256" key="2">
    <source>
        <dbReference type="SAM" id="MobiDB-lite"/>
    </source>
</evidence>
<evidence type="ECO:0000305" key="3"/>